<comment type="function">
    <text evidence="1">ATPase subunit of a proteasome-like degradation complex; this subunit has chaperone activity. The binding of ATP and its subsequent hydrolysis by HslU are essential for unfolding of protein substrates subsequently hydrolyzed by HslV. HslU recognizes the N-terminal part of its protein substrates and unfolds these before they are guided to HslV for hydrolysis.</text>
</comment>
<comment type="subunit">
    <text evidence="1">A double ring-shaped homohexamer of HslV is capped on each side by a ring-shaped HslU homohexamer. The assembly of the HslU/HslV complex is dependent on binding of ATP.</text>
</comment>
<comment type="subcellular location">
    <subcellularLocation>
        <location evidence="1">Cytoplasm</location>
    </subcellularLocation>
</comment>
<comment type="similarity">
    <text evidence="1">Belongs to the ClpX chaperone family. HslU subfamily.</text>
</comment>
<protein>
    <recommendedName>
        <fullName evidence="1">ATP-dependent protease ATPase subunit HslU</fullName>
    </recommendedName>
    <alternativeName>
        <fullName evidence="1">Unfoldase HslU</fullName>
    </alternativeName>
</protein>
<sequence>MEKLLGYRDLNMTPREIVEELDRHIIGQKHAKRAVANALRSRWRRKQVAEPLRSEITPKNILMIGPTGVGKTEIARRLAKLAEAPFIKVEATKFTEVGYVGRDVDSIIRDLVETSIKLEKNRAKERVKSKAREAALERVLDVLVPRKKQTAWTGEEEIDPARKMYRERILREEMNDTVIEIETNQSMSANVEIMTPPGMEEMSSQLSEMFKSFGREKKTKRKMTIAKALIQLAEEEAEALVSHEEIKSAAIDNAEQNGIVFIDEIDKVARRSDVGGADVSREGVQRDLLPLVEGCTISTKYGMIKTDHILFIASGAFHLAKPSDLIPELQGRLPVRVELDALTADDFKRILTEPDASLIKQYTALFATEQLHLEFTEDGINKIAEIAYHVNKTTENIGARRLHTLIERLTDSLSFDAADRRDGDRVIIDAAYVEKTLGEISNNEDLSRFIL</sequence>
<reference key="1">
    <citation type="journal article" date="2007" name="Nat. Biotechnol.">
        <title>Genome sequence and identification of candidate vaccine antigens from the animal pathogen Dichelobacter nodosus.</title>
        <authorList>
            <person name="Myers G.S.A."/>
            <person name="Parker D."/>
            <person name="Al-Hasani K."/>
            <person name="Kennan R.M."/>
            <person name="Seemann T."/>
            <person name="Ren Q."/>
            <person name="Badger J.H."/>
            <person name="Selengut J.D."/>
            <person name="Deboy R.T."/>
            <person name="Tettelin H."/>
            <person name="Boyce J.D."/>
            <person name="McCarl V.P."/>
            <person name="Han X."/>
            <person name="Nelson W.C."/>
            <person name="Madupu R."/>
            <person name="Mohamoud Y."/>
            <person name="Holley T."/>
            <person name="Fedorova N."/>
            <person name="Khouri H."/>
            <person name="Bottomley S.P."/>
            <person name="Whittington R.J."/>
            <person name="Adler B."/>
            <person name="Songer J.G."/>
            <person name="Rood J.I."/>
            <person name="Paulsen I.T."/>
        </authorList>
    </citation>
    <scope>NUCLEOTIDE SEQUENCE [LARGE SCALE GENOMIC DNA]</scope>
    <source>
        <strain>VCS1703A</strain>
    </source>
</reference>
<name>HSLU_DICNV</name>
<keyword id="KW-0067">ATP-binding</keyword>
<keyword id="KW-0143">Chaperone</keyword>
<keyword id="KW-0963">Cytoplasm</keyword>
<keyword id="KW-0547">Nucleotide-binding</keyword>
<keyword id="KW-1185">Reference proteome</keyword>
<keyword id="KW-0346">Stress response</keyword>
<proteinExistence type="inferred from homology"/>
<gene>
    <name evidence="1" type="primary">hslU</name>
    <name type="ordered locus">DNO_1347</name>
</gene>
<dbReference type="EMBL" id="CP000513">
    <property type="protein sequence ID" value="ABQ14270.1"/>
    <property type="molecule type" value="Genomic_DNA"/>
</dbReference>
<dbReference type="RefSeq" id="WP_012031631.1">
    <property type="nucleotide sequence ID" value="NC_009446.1"/>
</dbReference>
<dbReference type="SMR" id="A5EX25"/>
<dbReference type="STRING" id="246195.DNO_1347"/>
<dbReference type="KEGG" id="dno:DNO_1347"/>
<dbReference type="eggNOG" id="COG1220">
    <property type="taxonomic scope" value="Bacteria"/>
</dbReference>
<dbReference type="HOGENOM" id="CLU_033123_0_0_6"/>
<dbReference type="OrthoDB" id="9804062at2"/>
<dbReference type="Proteomes" id="UP000000248">
    <property type="component" value="Chromosome"/>
</dbReference>
<dbReference type="GO" id="GO:0009376">
    <property type="term" value="C:HslUV protease complex"/>
    <property type="evidence" value="ECO:0007669"/>
    <property type="project" value="UniProtKB-UniRule"/>
</dbReference>
<dbReference type="GO" id="GO:0005524">
    <property type="term" value="F:ATP binding"/>
    <property type="evidence" value="ECO:0007669"/>
    <property type="project" value="UniProtKB-UniRule"/>
</dbReference>
<dbReference type="GO" id="GO:0016887">
    <property type="term" value="F:ATP hydrolysis activity"/>
    <property type="evidence" value="ECO:0007669"/>
    <property type="project" value="InterPro"/>
</dbReference>
<dbReference type="GO" id="GO:0008233">
    <property type="term" value="F:peptidase activity"/>
    <property type="evidence" value="ECO:0007669"/>
    <property type="project" value="InterPro"/>
</dbReference>
<dbReference type="GO" id="GO:0036402">
    <property type="term" value="F:proteasome-activating activity"/>
    <property type="evidence" value="ECO:0007669"/>
    <property type="project" value="UniProtKB-UniRule"/>
</dbReference>
<dbReference type="GO" id="GO:0043335">
    <property type="term" value="P:protein unfolding"/>
    <property type="evidence" value="ECO:0007669"/>
    <property type="project" value="UniProtKB-UniRule"/>
</dbReference>
<dbReference type="GO" id="GO:0051603">
    <property type="term" value="P:proteolysis involved in protein catabolic process"/>
    <property type="evidence" value="ECO:0007669"/>
    <property type="project" value="TreeGrafter"/>
</dbReference>
<dbReference type="CDD" id="cd19498">
    <property type="entry name" value="RecA-like_HslU"/>
    <property type="match status" value="1"/>
</dbReference>
<dbReference type="FunFam" id="3.40.50.300:FF:000213">
    <property type="entry name" value="ATP-dependent protease ATPase subunit HslU"/>
    <property type="match status" value="1"/>
</dbReference>
<dbReference type="FunFam" id="3.40.50.300:FF:000220">
    <property type="entry name" value="ATP-dependent protease ATPase subunit HslU"/>
    <property type="match status" value="1"/>
</dbReference>
<dbReference type="Gene3D" id="1.10.8.60">
    <property type="match status" value="1"/>
</dbReference>
<dbReference type="Gene3D" id="1.10.8.10">
    <property type="entry name" value="DNA helicase RuvA subunit, C-terminal domain"/>
    <property type="match status" value="2"/>
</dbReference>
<dbReference type="Gene3D" id="3.40.50.300">
    <property type="entry name" value="P-loop containing nucleotide triphosphate hydrolases"/>
    <property type="match status" value="1"/>
</dbReference>
<dbReference type="HAMAP" id="MF_00249">
    <property type="entry name" value="HslU"/>
    <property type="match status" value="1"/>
</dbReference>
<dbReference type="InterPro" id="IPR003593">
    <property type="entry name" value="AAA+_ATPase"/>
</dbReference>
<dbReference type="InterPro" id="IPR050052">
    <property type="entry name" value="ATP-dep_Clp_protease_ClpX"/>
</dbReference>
<dbReference type="InterPro" id="IPR003959">
    <property type="entry name" value="ATPase_AAA_core"/>
</dbReference>
<dbReference type="InterPro" id="IPR019489">
    <property type="entry name" value="Clp_ATPase_C"/>
</dbReference>
<dbReference type="InterPro" id="IPR004491">
    <property type="entry name" value="HslU"/>
</dbReference>
<dbReference type="InterPro" id="IPR027417">
    <property type="entry name" value="P-loop_NTPase"/>
</dbReference>
<dbReference type="NCBIfam" id="TIGR00390">
    <property type="entry name" value="hslU"/>
    <property type="match status" value="1"/>
</dbReference>
<dbReference type="NCBIfam" id="NF003544">
    <property type="entry name" value="PRK05201.1"/>
    <property type="match status" value="1"/>
</dbReference>
<dbReference type="PANTHER" id="PTHR48102">
    <property type="entry name" value="ATP-DEPENDENT CLP PROTEASE ATP-BINDING SUBUNIT CLPX-LIKE, MITOCHONDRIAL-RELATED"/>
    <property type="match status" value="1"/>
</dbReference>
<dbReference type="PANTHER" id="PTHR48102:SF3">
    <property type="entry name" value="ATP-DEPENDENT PROTEASE ATPASE SUBUNIT HSLU"/>
    <property type="match status" value="1"/>
</dbReference>
<dbReference type="Pfam" id="PF00004">
    <property type="entry name" value="AAA"/>
    <property type="match status" value="1"/>
</dbReference>
<dbReference type="Pfam" id="PF07724">
    <property type="entry name" value="AAA_2"/>
    <property type="match status" value="1"/>
</dbReference>
<dbReference type="SMART" id="SM00382">
    <property type="entry name" value="AAA"/>
    <property type="match status" value="1"/>
</dbReference>
<dbReference type="SMART" id="SM01086">
    <property type="entry name" value="ClpB_D2-small"/>
    <property type="match status" value="1"/>
</dbReference>
<dbReference type="SUPFAM" id="SSF52540">
    <property type="entry name" value="P-loop containing nucleoside triphosphate hydrolases"/>
    <property type="match status" value="1"/>
</dbReference>
<organism>
    <name type="scientific">Dichelobacter nodosus (strain VCS1703A)</name>
    <dbReference type="NCBI Taxonomy" id="246195"/>
    <lineage>
        <taxon>Bacteria</taxon>
        <taxon>Pseudomonadati</taxon>
        <taxon>Pseudomonadota</taxon>
        <taxon>Gammaproteobacteria</taxon>
        <taxon>Cardiobacteriales</taxon>
        <taxon>Cardiobacteriaceae</taxon>
        <taxon>Dichelobacter</taxon>
    </lineage>
</organism>
<accession>A5EX25</accession>
<feature type="chain" id="PRO_1000012733" description="ATP-dependent protease ATPase subunit HslU">
    <location>
        <begin position="1"/>
        <end position="451"/>
    </location>
</feature>
<feature type="binding site" evidence="1">
    <location>
        <position position="26"/>
    </location>
    <ligand>
        <name>ATP</name>
        <dbReference type="ChEBI" id="CHEBI:30616"/>
    </ligand>
</feature>
<feature type="binding site" evidence="1">
    <location>
        <begin position="68"/>
        <end position="73"/>
    </location>
    <ligand>
        <name>ATP</name>
        <dbReference type="ChEBI" id="CHEBI:30616"/>
    </ligand>
</feature>
<feature type="binding site" evidence="1">
    <location>
        <position position="263"/>
    </location>
    <ligand>
        <name>ATP</name>
        <dbReference type="ChEBI" id="CHEBI:30616"/>
    </ligand>
</feature>
<feature type="binding site" evidence="1">
    <location>
        <position position="328"/>
    </location>
    <ligand>
        <name>ATP</name>
        <dbReference type="ChEBI" id="CHEBI:30616"/>
    </ligand>
</feature>
<feature type="binding site" evidence="1">
    <location>
        <position position="400"/>
    </location>
    <ligand>
        <name>ATP</name>
        <dbReference type="ChEBI" id="CHEBI:30616"/>
    </ligand>
</feature>
<evidence type="ECO:0000255" key="1">
    <source>
        <dbReference type="HAMAP-Rule" id="MF_00249"/>
    </source>
</evidence>